<protein>
    <recommendedName>
        <fullName evidence="1">4-hydroxy-2-oxovalerate aldolase</fullName>
        <shortName evidence="1">HOA</shortName>
        <ecNumber evidence="1">4.1.3.39</ecNumber>
    </recommendedName>
    <alternativeName>
        <fullName evidence="1">4-hydroxy-2-keto-pentanoic acid aldolase</fullName>
    </alternativeName>
    <alternativeName>
        <fullName evidence="1">4-hydroxy-2-oxopentanoate aldolase</fullName>
    </alternativeName>
</protein>
<reference key="1">
    <citation type="journal article" date="1994" name="J. Bacteriol.">
        <title>Nucleotide sequence and functional analysis of the meta-cleavage pathway involved in biphenyl and polychlorinated biphenyl degradation in Pseudomonas sp. strain KKS102.</title>
        <authorList>
            <person name="Kikuchi Y."/>
            <person name="Yasukochi Y."/>
            <person name="Nagata Y."/>
            <person name="Fukuda M."/>
            <person name="Takagi M."/>
        </authorList>
    </citation>
    <scope>NUCLEOTIDE SEQUENCE [GENOMIC DNA]</scope>
</reference>
<dbReference type="EC" id="4.1.3.39" evidence="1"/>
<dbReference type="EMBL" id="D16407">
    <property type="protein sequence ID" value="BAA03893.1"/>
    <property type="molecule type" value="Genomic_DNA"/>
</dbReference>
<dbReference type="PIR" id="C55511">
    <property type="entry name" value="C55511"/>
</dbReference>
<dbReference type="SMR" id="P51014"/>
<dbReference type="UniPathway" id="UPA00155"/>
<dbReference type="GO" id="GO:0003852">
    <property type="term" value="F:2-isopropylmalate synthase activity"/>
    <property type="evidence" value="ECO:0007669"/>
    <property type="project" value="TreeGrafter"/>
</dbReference>
<dbReference type="GO" id="GO:0008701">
    <property type="term" value="F:4-hydroxy-2-oxovalerate aldolase activity"/>
    <property type="evidence" value="ECO:0007669"/>
    <property type="project" value="UniProtKB-UniRule"/>
</dbReference>
<dbReference type="GO" id="GO:0030145">
    <property type="term" value="F:manganese ion binding"/>
    <property type="evidence" value="ECO:0007669"/>
    <property type="project" value="UniProtKB-UniRule"/>
</dbReference>
<dbReference type="GO" id="GO:0009056">
    <property type="term" value="P:catabolic process"/>
    <property type="evidence" value="ECO:0007669"/>
    <property type="project" value="UniProtKB-KW"/>
</dbReference>
<dbReference type="GO" id="GO:0009098">
    <property type="term" value="P:L-leucine biosynthetic process"/>
    <property type="evidence" value="ECO:0007669"/>
    <property type="project" value="TreeGrafter"/>
</dbReference>
<dbReference type="CDD" id="cd07943">
    <property type="entry name" value="DRE_TIM_HOA"/>
    <property type="match status" value="1"/>
</dbReference>
<dbReference type="FunFam" id="1.10.8.60:FF:000042">
    <property type="entry name" value="4-hydroxy-2-oxovalerate aldolase"/>
    <property type="match status" value="1"/>
</dbReference>
<dbReference type="Gene3D" id="1.10.8.60">
    <property type="match status" value="1"/>
</dbReference>
<dbReference type="Gene3D" id="3.20.20.70">
    <property type="entry name" value="Aldolase class I"/>
    <property type="match status" value="1"/>
</dbReference>
<dbReference type="HAMAP" id="MF_01656">
    <property type="entry name" value="HOA"/>
    <property type="match status" value="1"/>
</dbReference>
<dbReference type="InterPro" id="IPR050073">
    <property type="entry name" value="2-IPM_HCS-like"/>
</dbReference>
<dbReference type="InterPro" id="IPR017629">
    <property type="entry name" value="4OH_2_O-val_aldolase"/>
</dbReference>
<dbReference type="InterPro" id="IPR013785">
    <property type="entry name" value="Aldolase_TIM"/>
</dbReference>
<dbReference type="InterPro" id="IPR012425">
    <property type="entry name" value="DmpG_comm"/>
</dbReference>
<dbReference type="InterPro" id="IPR035685">
    <property type="entry name" value="DRE_TIM_HOA"/>
</dbReference>
<dbReference type="InterPro" id="IPR000891">
    <property type="entry name" value="PYR_CT"/>
</dbReference>
<dbReference type="NCBIfam" id="TIGR03217">
    <property type="entry name" value="4OH_2_O_val_ald"/>
    <property type="match status" value="1"/>
</dbReference>
<dbReference type="NCBIfam" id="NF006049">
    <property type="entry name" value="PRK08195.1"/>
    <property type="match status" value="1"/>
</dbReference>
<dbReference type="PANTHER" id="PTHR10277:SF9">
    <property type="entry name" value="2-ISOPROPYLMALATE SYNTHASE 1, CHLOROPLASTIC-RELATED"/>
    <property type="match status" value="1"/>
</dbReference>
<dbReference type="PANTHER" id="PTHR10277">
    <property type="entry name" value="HOMOCITRATE SYNTHASE-RELATED"/>
    <property type="match status" value="1"/>
</dbReference>
<dbReference type="Pfam" id="PF07836">
    <property type="entry name" value="DmpG_comm"/>
    <property type="match status" value="1"/>
</dbReference>
<dbReference type="Pfam" id="PF00682">
    <property type="entry name" value="HMGL-like"/>
    <property type="match status" value="1"/>
</dbReference>
<dbReference type="SUPFAM" id="SSF51569">
    <property type="entry name" value="Aldolase"/>
    <property type="match status" value="1"/>
</dbReference>
<dbReference type="SUPFAM" id="SSF89000">
    <property type="entry name" value="post-HMGL domain-like"/>
    <property type="match status" value="1"/>
</dbReference>
<dbReference type="PROSITE" id="PS50991">
    <property type="entry name" value="PYR_CT"/>
    <property type="match status" value="1"/>
</dbReference>
<comment type="catalytic activity">
    <reaction evidence="1">
        <text>(S)-4-hydroxy-2-oxopentanoate = acetaldehyde + pyruvate</text>
        <dbReference type="Rhea" id="RHEA:22624"/>
        <dbReference type="ChEBI" id="CHEBI:15343"/>
        <dbReference type="ChEBI" id="CHEBI:15361"/>
        <dbReference type="ChEBI" id="CHEBI:73143"/>
        <dbReference type="EC" id="4.1.3.39"/>
    </reaction>
</comment>
<comment type="pathway">
    <text>Xenobiotic degradation; biphenyl degradation.</text>
</comment>
<comment type="similarity">
    <text evidence="1">Belongs to the 4-hydroxy-2-oxovalerate aldolase family.</text>
</comment>
<gene>
    <name type="primary">bphF</name>
</gene>
<evidence type="ECO:0000255" key="1">
    <source>
        <dbReference type="HAMAP-Rule" id="MF_01656"/>
    </source>
</evidence>
<accession>P51014</accession>
<organism>
    <name type="scientific">Pseudomonas sp. (strain KKS102)</name>
    <dbReference type="NCBI Taxonomy" id="307"/>
    <lineage>
        <taxon>Bacteria</taxon>
        <taxon>Pseudomonadati</taxon>
        <taxon>Pseudomonadota</taxon>
    </lineage>
</organism>
<keyword id="KW-0058">Aromatic hydrocarbons catabolism</keyword>
<keyword id="KW-0456">Lyase</keyword>
<keyword id="KW-0464">Manganese</keyword>
<keyword id="KW-0479">Metal-binding</keyword>
<name>HOA_PSES1</name>
<proteinExistence type="inferred from homology"/>
<sequence length="352" mass="38264">MTTKKIYISDVTLRDGSHAIRHQYSVEQVRTIAKELDEAKVDSIEVAHGSGLQGSSFNYGFGAHTDLEWIEAVASVVKHAKIATLLLPGIGTIHDLKAAYDAGARIVRVATHCTEADISKQHIEYARHLGMEAVGFLMMSHMSTPQGLAQQAKLMESYGATCCYVVDSGGALSMDDVRMRFRAFKDVLKPETETGIHAHHNLSLGVANSIVAIEEGCDRVDASLAGMGAGAGNAPLEVFIAAAERMGWHHGTELYKLMDAADDIVRPLQDRPVRVDRETLALGYAGVYSSFLRHSEAAAQKYGLKTMDILVELGRRRMVGGQEDMIVDVALDLLKSLEHERIHAQPVSSEAG</sequence>
<feature type="chain" id="PRO_0000064977" description="4-hydroxy-2-oxovalerate aldolase">
    <location>
        <begin position="1"/>
        <end position="352"/>
    </location>
</feature>
<feature type="domain" description="Pyruvate carboxyltransferase" evidence="1">
    <location>
        <begin position="6"/>
        <end position="258"/>
    </location>
</feature>
<feature type="active site" description="Proton acceptor" evidence="1">
    <location>
        <position position="18"/>
    </location>
</feature>
<feature type="binding site" evidence="1">
    <location>
        <begin position="14"/>
        <end position="15"/>
    </location>
    <ligand>
        <name>substrate</name>
    </ligand>
</feature>
<feature type="binding site" evidence="1">
    <location>
        <position position="15"/>
    </location>
    <ligand>
        <name>Mn(2+)</name>
        <dbReference type="ChEBI" id="CHEBI:29035"/>
    </ligand>
</feature>
<feature type="binding site" evidence="1">
    <location>
        <position position="168"/>
    </location>
    <ligand>
        <name>substrate</name>
    </ligand>
</feature>
<feature type="binding site" evidence="1">
    <location>
        <position position="197"/>
    </location>
    <ligand>
        <name>Mn(2+)</name>
        <dbReference type="ChEBI" id="CHEBI:29035"/>
    </ligand>
</feature>
<feature type="binding site" evidence="1">
    <location>
        <position position="197"/>
    </location>
    <ligand>
        <name>substrate</name>
    </ligand>
</feature>
<feature type="binding site" evidence="1">
    <location>
        <position position="199"/>
    </location>
    <ligand>
        <name>Mn(2+)</name>
        <dbReference type="ChEBI" id="CHEBI:29035"/>
    </ligand>
</feature>
<feature type="binding site" evidence="1">
    <location>
        <position position="288"/>
    </location>
    <ligand>
        <name>substrate</name>
    </ligand>
</feature>
<feature type="site" description="Transition state stabilizer" evidence="1">
    <location>
        <position position="14"/>
    </location>
</feature>